<accession>B6JEU3</accession>
<accession>F8BZB7</accession>
<gene>
    <name evidence="1" type="primary">rplN</name>
    <name type="ordered locus">OCAR_5687</name>
    <name type="ordered locus">OCA5_c23200</name>
</gene>
<reference key="1">
    <citation type="journal article" date="2008" name="J. Bacteriol.">
        <title>Genome sequence of the chemolithoautotrophic bacterium Oligotropha carboxidovorans OM5T.</title>
        <authorList>
            <person name="Paul D."/>
            <person name="Bridges S."/>
            <person name="Burgess S.C."/>
            <person name="Dandass Y."/>
            <person name="Lawrence M.L."/>
        </authorList>
    </citation>
    <scope>NUCLEOTIDE SEQUENCE [LARGE SCALE GENOMIC DNA]</scope>
    <source>
        <strain>ATCC 49405 / DSM 1227 / KCTC 32145 / OM5</strain>
    </source>
</reference>
<reference key="2">
    <citation type="journal article" date="2011" name="J. Bacteriol.">
        <title>Complete genome sequences of the chemolithoautotrophic Oligotropha carboxidovorans strains OM4 and OM5.</title>
        <authorList>
            <person name="Volland S."/>
            <person name="Rachinger M."/>
            <person name="Strittmatter A."/>
            <person name="Daniel R."/>
            <person name="Gottschalk G."/>
            <person name="Meyer O."/>
        </authorList>
    </citation>
    <scope>NUCLEOTIDE SEQUENCE [LARGE SCALE GENOMIC DNA]</scope>
    <source>
        <strain>ATCC 49405 / DSM 1227 / KCTC 32145 / OM5</strain>
    </source>
</reference>
<protein>
    <recommendedName>
        <fullName evidence="1">Large ribosomal subunit protein uL14</fullName>
    </recommendedName>
    <alternativeName>
        <fullName evidence="2">50S ribosomal protein L14</fullName>
    </alternativeName>
</protein>
<name>RL14_AFIC5</name>
<keyword id="KW-1185">Reference proteome</keyword>
<keyword id="KW-0687">Ribonucleoprotein</keyword>
<keyword id="KW-0689">Ribosomal protein</keyword>
<keyword id="KW-0694">RNA-binding</keyword>
<keyword id="KW-0699">rRNA-binding</keyword>
<evidence type="ECO:0000255" key="1">
    <source>
        <dbReference type="HAMAP-Rule" id="MF_01367"/>
    </source>
</evidence>
<evidence type="ECO:0000305" key="2"/>
<proteinExistence type="inferred from homology"/>
<feature type="chain" id="PRO_1000144305" description="Large ribosomal subunit protein uL14">
    <location>
        <begin position="1"/>
        <end position="122"/>
    </location>
</feature>
<comment type="function">
    <text evidence="1">Binds to 23S rRNA. Forms part of two intersubunit bridges in the 70S ribosome.</text>
</comment>
<comment type="subunit">
    <text evidence="1">Part of the 50S ribosomal subunit. Forms a cluster with proteins L3 and L19. In the 70S ribosome, L14 and L19 interact and together make contacts with the 16S rRNA in bridges B5 and B8.</text>
</comment>
<comment type="similarity">
    <text evidence="1">Belongs to the universal ribosomal protein uL14 family.</text>
</comment>
<organism>
    <name type="scientific">Afipia carboxidovorans (strain ATCC 49405 / DSM 1227 / KCTC 32145 / OM5)</name>
    <name type="common">Oligotropha carboxidovorans</name>
    <dbReference type="NCBI Taxonomy" id="504832"/>
    <lineage>
        <taxon>Bacteria</taxon>
        <taxon>Pseudomonadati</taxon>
        <taxon>Pseudomonadota</taxon>
        <taxon>Alphaproteobacteria</taxon>
        <taxon>Hyphomicrobiales</taxon>
        <taxon>Nitrobacteraceae</taxon>
        <taxon>Afipia</taxon>
    </lineage>
</organism>
<dbReference type="EMBL" id="CP001196">
    <property type="protein sequence ID" value="ACI92815.1"/>
    <property type="molecule type" value="Genomic_DNA"/>
</dbReference>
<dbReference type="EMBL" id="CP002826">
    <property type="protein sequence ID" value="AEI07020.1"/>
    <property type="molecule type" value="Genomic_DNA"/>
</dbReference>
<dbReference type="RefSeq" id="WP_012562844.1">
    <property type="nucleotide sequence ID" value="NC_015684.1"/>
</dbReference>
<dbReference type="SMR" id="B6JEU3"/>
<dbReference type="STRING" id="504832.OCA5_c23200"/>
<dbReference type="KEGG" id="oca:OCAR_5687"/>
<dbReference type="KEGG" id="ocg:OCA5_c23200"/>
<dbReference type="PATRIC" id="fig|504832.7.peg.2445"/>
<dbReference type="eggNOG" id="COG0093">
    <property type="taxonomic scope" value="Bacteria"/>
</dbReference>
<dbReference type="HOGENOM" id="CLU_095071_2_1_5"/>
<dbReference type="OrthoDB" id="9806379at2"/>
<dbReference type="Proteomes" id="UP000007730">
    <property type="component" value="Chromosome"/>
</dbReference>
<dbReference type="GO" id="GO:0022625">
    <property type="term" value="C:cytosolic large ribosomal subunit"/>
    <property type="evidence" value="ECO:0007669"/>
    <property type="project" value="TreeGrafter"/>
</dbReference>
<dbReference type="GO" id="GO:0070180">
    <property type="term" value="F:large ribosomal subunit rRNA binding"/>
    <property type="evidence" value="ECO:0007669"/>
    <property type="project" value="TreeGrafter"/>
</dbReference>
<dbReference type="GO" id="GO:0003735">
    <property type="term" value="F:structural constituent of ribosome"/>
    <property type="evidence" value="ECO:0007669"/>
    <property type="project" value="InterPro"/>
</dbReference>
<dbReference type="GO" id="GO:0006412">
    <property type="term" value="P:translation"/>
    <property type="evidence" value="ECO:0007669"/>
    <property type="project" value="UniProtKB-UniRule"/>
</dbReference>
<dbReference type="CDD" id="cd00337">
    <property type="entry name" value="Ribosomal_uL14"/>
    <property type="match status" value="1"/>
</dbReference>
<dbReference type="FunFam" id="2.40.150.20:FF:000001">
    <property type="entry name" value="50S ribosomal protein L14"/>
    <property type="match status" value="1"/>
</dbReference>
<dbReference type="Gene3D" id="2.40.150.20">
    <property type="entry name" value="Ribosomal protein L14"/>
    <property type="match status" value="1"/>
</dbReference>
<dbReference type="HAMAP" id="MF_01367">
    <property type="entry name" value="Ribosomal_uL14"/>
    <property type="match status" value="1"/>
</dbReference>
<dbReference type="InterPro" id="IPR000218">
    <property type="entry name" value="Ribosomal_uL14"/>
</dbReference>
<dbReference type="InterPro" id="IPR005745">
    <property type="entry name" value="Ribosomal_uL14_bac-type"/>
</dbReference>
<dbReference type="InterPro" id="IPR019972">
    <property type="entry name" value="Ribosomal_uL14_CS"/>
</dbReference>
<dbReference type="InterPro" id="IPR036853">
    <property type="entry name" value="Ribosomal_uL14_sf"/>
</dbReference>
<dbReference type="NCBIfam" id="TIGR01067">
    <property type="entry name" value="rplN_bact"/>
    <property type="match status" value="1"/>
</dbReference>
<dbReference type="PANTHER" id="PTHR11761">
    <property type="entry name" value="50S/60S RIBOSOMAL PROTEIN L14/L23"/>
    <property type="match status" value="1"/>
</dbReference>
<dbReference type="PANTHER" id="PTHR11761:SF3">
    <property type="entry name" value="LARGE RIBOSOMAL SUBUNIT PROTEIN UL14M"/>
    <property type="match status" value="1"/>
</dbReference>
<dbReference type="Pfam" id="PF00238">
    <property type="entry name" value="Ribosomal_L14"/>
    <property type="match status" value="1"/>
</dbReference>
<dbReference type="SMART" id="SM01374">
    <property type="entry name" value="Ribosomal_L14"/>
    <property type="match status" value="1"/>
</dbReference>
<dbReference type="SUPFAM" id="SSF50193">
    <property type="entry name" value="Ribosomal protein L14"/>
    <property type="match status" value="1"/>
</dbReference>
<dbReference type="PROSITE" id="PS00049">
    <property type="entry name" value="RIBOSOMAL_L14"/>
    <property type="match status" value="1"/>
</dbReference>
<sequence>MIQMQTNLDVADNSGARRVMCIKVLGGSKRRYATVGDIIVVSVKEAIPRGKVKKGDVMKAVVVRVAKDIRRADGSVIRFDRNAAVLVNNQSEPVGTRIFGPVPRELRAKNHMKIISLAPEVL</sequence>